<reference key="1">
    <citation type="submission" date="2006-10" db="EMBL/GenBank/DDBJ databases">
        <title>Complete sequence of Syntrophobacter fumaroxidans MPOB.</title>
        <authorList>
            <consortium name="US DOE Joint Genome Institute"/>
            <person name="Copeland A."/>
            <person name="Lucas S."/>
            <person name="Lapidus A."/>
            <person name="Barry K."/>
            <person name="Detter J.C."/>
            <person name="Glavina del Rio T."/>
            <person name="Hammon N."/>
            <person name="Israni S."/>
            <person name="Pitluck S."/>
            <person name="Goltsman E.G."/>
            <person name="Martinez M."/>
            <person name="Schmutz J."/>
            <person name="Larimer F."/>
            <person name="Land M."/>
            <person name="Hauser L."/>
            <person name="Kyrpides N."/>
            <person name="Kim E."/>
            <person name="Boone D.R."/>
            <person name="Brockman F."/>
            <person name="Culley D."/>
            <person name="Ferry J."/>
            <person name="Gunsalus R."/>
            <person name="McInerney M.J."/>
            <person name="Morrison M."/>
            <person name="Plugge C."/>
            <person name="Rohlin L."/>
            <person name="Scholten J."/>
            <person name="Sieber J."/>
            <person name="Stams A.J.M."/>
            <person name="Worm P."/>
            <person name="Henstra A.M."/>
            <person name="Richardson P."/>
        </authorList>
    </citation>
    <scope>NUCLEOTIDE SEQUENCE [LARGE SCALE GENOMIC DNA]</scope>
    <source>
        <strain>DSM 10017 / MPOB</strain>
    </source>
</reference>
<proteinExistence type="inferred from homology"/>
<accession>A0LJ65</accession>
<sequence>MSGQKPIYRRILLKLSGEALLGKEAYGIDSSVLDQIAEEVTAVHQMGVQVAIVIGGGNIFRGVSGASRGMDRSTADYMGMLATVMNALALQQALEKHGTSTRVQSAIDMKEVAEPYIRRRALRHMEKGRIVIFAAGTGLPFFTTDTTAALRAIEMGAEVLMKATKVDGIYASDPKKNPSALRYDRISFSEVLQKDLKVMDATAISLAKDQNMRIVVFNLRKKGNIKKIVLGKCIGTVVEGCDHAQ</sequence>
<gene>
    <name evidence="1" type="primary">pyrH</name>
    <name type="ordered locus">Sfum_1780</name>
</gene>
<feature type="chain" id="PRO_0000323972" description="Uridylate kinase">
    <location>
        <begin position="1"/>
        <end position="245"/>
    </location>
</feature>
<feature type="binding site" evidence="1">
    <location>
        <begin position="14"/>
        <end position="17"/>
    </location>
    <ligand>
        <name>ATP</name>
        <dbReference type="ChEBI" id="CHEBI:30616"/>
    </ligand>
</feature>
<feature type="binding site" evidence="1">
    <location>
        <position position="56"/>
    </location>
    <ligand>
        <name>UMP</name>
        <dbReference type="ChEBI" id="CHEBI:57865"/>
    </ligand>
</feature>
<feature type="binding site" evidence="1">
    <location>
        <position position="57"/>
    </location>
    <ligand>
        <name>ATP</name>
        <dbReference type="ChEBI" id="CHEBI:30616"/>
    </ligand>
</feature>
<feature type="binding site" evidence="1">
    <location>
        <position position="61"/>
    </location>
    <ligand>
        <name>ATP</name>
        <dbReference type="ChEBI" id="CHEBI:30616"/>
    </ligand>
</feature>
<feature type="binding site" evidence="1">
    <location>
        <position position="76"/>
    </location>
    <ligand>
        <name>UMP</name>
        <dbReference type="ChEBI" id="CHEBI:57865"/>
    </ligand>
</feature>
<feature type="binding site" evidence="1">
    <location>
        <begin position="137"/>
        <end position="144"/>
    </location>
    <ligand>
        <name>UMP</name>
        <dbReference type="ChEBI" id="CHEBI:57865"/>
    </ligand>
</feature>
<feature type="binding site" evidence="1">
    <location>
        <position position="164"/>
    </location>
    <ligand>
        <name>ATP</name>
        <dbReference type="ChEBI" id="CHEBI:30616"/>
    </ligand>
</feature>
<feature type="binding site" evidence="1">
    <location>
        <position position="170"/>
    </location>
    <ligand>
        <name>ATP</name>
        <dbReference type="ChEBI" id="CHEBI:30616"/>
    </ligand>
</feature>
<feature type="binding site" evidence="1">
    <location>
        <position position="173"/>
    </location>
    <ligand>
        <name>ATP</name>
        <dbReference type="ChEBI" id="CHEBI:30616"/>
    </ligand>
</feature>
<dbReference type="EC" id="2.7.4.22" evidence="1"/>
<dbReference type="EMBL" id="CP000478">
    <property type="protein sequence ID" value="ABK17467.1"/>
    <property type="molecule type" value="Genomic_DNA"/>
</dbReference>
<dbReference type="RefSeq" id="WP_011698637.1">
    <property type="nucleotide sequence ID" value="NC_008554.1"/>
</dbReference>
<dbReference type="SMR" id="A0LJ65"/>
<dbReference type="FunCoup" id="A0LJ65">
    <property type="interactions" value="614"/>
</dbReference>
<dbReference type="STRING" id="335543.Sfum_1780"/>
<dbReference type="KEGG" id="sfu:Sfum_1780"/>
<dbReference type="eggNOG" id="COG0528">
    <property type="taxonomic scope" value="Bacteria"/>
</dbReference>
<dbReference type="HOGENOM" id="CLU_033861_0_0_7"/>
<dbReference type="InParanoid" id="A0LJ65"/>
<dbReference type="OrthoDB" id="9807458at2"/>
<dbReference type="UniPathway" id="UPA00159">
    <property type="reaction ID" value="UER00275"/>
</dbReference>
<dbReference type="Proteomes" id="UP000001784">
    <property type="component" value="Chromosome"/>
</dbReference>
<dbReference type="GO" id="GO:0005737">
    <property type="term" value="C:cytoplasm"/>
    <property type="evidence" value="ECO:0007669"/>
    <property type="project" value="UniProtKB-SubCell"/>
</dbReference>
<dbReference type="GO" id="GO:0005524">
    <property type="term" value="F:ATP binding"/>
    <property type="evidence" value="ECO:0007669"/>
    <property type="project" value="UniProtKB-KW"/>
</dbReference>
<dbReference type="GO" id="GO:0033862">
    <property type="term" value="F:UMP kinase activity"/>
    <property type="evidence" value="ECO:0007669"/>
    <property type="project" value="UniProtKB-EC"/>
</dbReference>
<dbReference type="GO" id="GO:0044210">
    <property type="term" value="P:'de novo' CTP biosynthetic process"/>
    <property type="evidence" value="ECO:0007669"/>
    <property type="project" value="UniProtKB-UniRule"/>
</dbReference>
<dbReference type="GO" id="GO:0006225">
    <property type="term" value="P:UDP biosynthetic process"/>
    <property type="evidence" value="ECO:0007669"/>
    <property type="project" value="TreeGrafter"/>
</dbReference>
<dbReference type="CDD" id="cd04254">
    <property type="entry name" value="AAK_UMPK-PyrH-Ec"/>
    <property type="match status" value="1"/>
</dbReference>
<dbReference type="FunFam" id="3.40.1160.10:FF:000001">
    <property type="entry name" value="Uridylate kinase"/>
    <property type="match status" value="1"/>
</dbReference>
<dbReference type="Gene3D" id="3.40.1160.10">
    <property type="entry name" value="Acetylglutamate kinase-like"/>
    <property type="match status" value="1"/>
</dbReference>
<dbReference type="HAMAP" id="MF_01220_B">
    <property type="entry name" value="PyrH_B"/>
    <property type="match status" value="1"/>
</dbReference>
<dbReference type="InterPro" id="IPR036393">
    <property type="entry name" value="AceGlu_kinase-like_sf"/>
</dbReference>
<dbReference type="InterPro" id="IPR001048">
    <property type="entry name" value="Asp/Glu/Uridylate_kinase"/>
</dbReference>
<dbReference type="InterPro" id="IPR011817">
    <property type="entry name" value="Uridylate_kinase"/>
</dbReference>
<dbReference type="InterPro" id="IPR015963">
    <property type="entry name" value="Uridylate_kinase_bac"/>
</dbReference>
<dbReference type="NCBIfam" id="TIGR02075">
    <property type="entry name" value="pyrH_bact"/>
    <property type="match status" value="1"/>
</dbReference>
<dbReference type="PANTHER" id="PTHR42833">
    <property type="entry name" value="URIDYLATE KINASE"/>
    <property type="match status" value="1"/>
</dbReference>
<dbReference type="PANTHER" id="PTHR42833:SF4">
    <property type="entry name" value="URIDYLATE KINASE PUMPKIN, CHLOROPLASTIC"/>
    <property type="match status" value="1"/>
</dbReference>
<dbReference type="Pfam" id="PF00696">
    <property type="entry name" value="AA_kinase"/>
    <property type="match status" value="1"/>
</dbReference>
<dbReference type="PIRSF" id="PIRSF005650">
    <property type="entry name" value="Uridylate_kin"/>
    <property type="match status" value="1"/>
</dbReference>
<dbReference type="SUPFAM" id="SSF53633">
    <property type="entry name" value="Carbamate kinase-like"/>
    <property type="match status" value="1"/>
</dbReference>
<keyword id="KW-0067">ATP-binding</keyword>
<keyword id="KW-0963">Cytoplasm</keyword>
<keyword id="KW-0418">Kinase</keyword>
<keyword id="KW-0547">Nucleotide-binding</keyword>
<keyword id="KW-0665">Pyrimidine biosynthesis</keyword>
<keyword id="KW-1185">Reference proteome</keyword>
<keyword id="KW-0808">Transferase</keyword>
<evidence type="ECO:0000255" key="1">
    <source>
        <dbReference type="HAMAP-Rule" id="MF_01220"/>
    </source>
</evidence>
<name>PYRH_SYNFM</name>
<protein>
    <recommendedName>
        <fullName evidence="1">Uridylate kinase</fullName>
        <shortName evidence="1">UK</shortName>
        <ecNumber evidence="1">2.7.4.22</ecNumber>
    </recommendedName>
    <alternativeName>
        <fullName evidence="1">Uridine monophosphate kinase</fullName>
        <shortName evidence="1">UMP kinase</shortName>
        <shortName evidence="1">UMPK</shortName>
    </alternativeName>
</protein>
<organism>
    <name type="scientific">Syntrophobacter fumaroxidans (strain DSM 10017 / MPOB)</name>
    <dbReference type="NCBI Taxonomy" id="335543"/>
    <lineage>
        <taxon>Bacteria</taxon>
        <taxon>Pseudomonadati</taxon>
        <taxon>Thermodesulfobacteriota</taxon>
        <taxon>Syntrophobacteria</taxon>
        <taxon>Syntrophobacterales</taxon>
        <taxon>Syntrophobacteraceae</taxon>
        <taxon>Syntrophobacter</taxon>
    </lineage>
</organism>
<comment type="function">
    <text evidence="1">Catalyzes the reversible phosphorylation of UMP to UDP.</text>
</comment>
<comment type="catalytic activity">
    <reaction evidence="1">
        <text>UMP + ATP = UDP + ADP</text>
        <dbReference type="Rhea" id="RHEA:24400"/>
        <dbReference type="ChEBI" id="CHEBI:30616"/>
        <dbReference type="ChEBI" id="CHEBI:57865"/>
        <dbReference type="ChEBI" id="CHEBI:58223"/>
        <dbReference type="ChEBI" id="CHEBI:456216"/>
        <dbReference type="EC" id="2.7.4.22"/>
    </reaction>
</comment>
<comment type="activity regulation">
    <text evidence="1">Inhibited by UTP.</text>
</comment>
<comment type="pathway">
    <text evidence="1">Pyrimidine metabolism; CTP biosynthesis via de novo pathway; UDP from UMP (UMPK route): step 1/1.</text>
</comment>
<comment type="subunit">
    <text evidence="1">Homohexamer.</text>
</comment>
<comment type="subcellular location">
    <subcellularLocation>
        <location evidence="1">Cytoplasm</location>
    </subcellularLocation>
</comment>
<comment type="similarity">
    <text evidence="1">Belongs to the UMP kinase family.</text>
</comment>